<sequence length="476" mass="51994">MTKLRSKWLGLRSVTIFLINFSLAFAFVSAERRGKSLRLSTDETRENESSFFLKAINFLWESDQIGYRHVWPEFEFNWQIVLGTLVGFFGAAFGSVGGVGGGGIFVPMLSLIIGFDPKSATAISKCMIMGASVSTVYYNLRLRHPTLDMPIIDYDLALLIQPMLMLGISIGVAFNVIFPDWLVTVLLIVLFLGTSTKAFLKGSETWNKETIEKKEAAKRLESNGVSGTEVEYVPLPAAPSTNPGNKKKEEVSIIENVYWKELGLLVFVWIVFLALQISKQNLANCSVAYWVINLLQIPVAVGVSGYEAVALYQGRRIIASKGQGDSNFTVGQLVMYCTFGIIAGIVGGLLGLGGGFIMGPLFLELGVPPQVSSATATFAMTFSSSMSVVEYYLLKRFPVPYALYLVGVATIAAWVGQHVVRRLIAAIGRASLIIFILASMIFISAISLGGVGIVNMIGKIQRHEYMGFENLCKYGG</sequence>
<keyword id="KW-0472">Membrane</keyword>
<keyword id="KW-1185">Reference proteome</keyword>
<keyword id="KW-0812">Transmembrane</keyword>
<keyword id="KW-1133">Transmembrane helix</keyword>
<keyword id="KW-0813">Transport</keyword>
<protein>
    <recommendedName>
        <fullName evidence="6">Sulfite exporter TauE/SafE family protein 3</fullName>
    </recommendedName>
</protein>
<dbReference type="EMBL" id="AC005395">
    <property type="protein sequence ID" value="AAC42255.1"/>
    <property type="status" value="ALT_SEQ"/>
    <property type="molecule type" value="Genomic_DNA"/>
</dbReference>
<dbReference type="EMBL" id="AC006053">
    <property type="protein sequence ID" value="AAM15102.1"/>
    <property type="status" value="ALT_SEQ"/>
    <property type="molecule type" value="Genomic_DNA"/>
</dbReference>
<dbReference type="EMBL" id="CP002685">
    <property type="protein sequence ID" value="AEC07746.1"/>
    <property type="molecule type" value="Genomic_DNA"/>
</dbReference>
<dbReference type="EMBL" id="AK117723">
    <property type="protein sequence ID" value="BAC42374.1"/>
    <property type="molecule type" value="mRNA"/>
</dbReference>
<dbReference type="EMBL" id="AY136387">
    <property type="protein sequence ID" value="AAM97053.1"/>
    <property type="molecule type" value="mRNA"/>
</dbReference>
<dbReference type="EMBL" id="BT002106">
    <property type="protein sequence ID" value="AAN72117.1"/>
    <property type="molecule type" value="mRNA"/>
</dbReference>
<dbReference type="EMBL" id="BT005381">
    <property type="protein sequence ID" value="AAO63445.1"/>
    <property type="molecule type" value="mRNA"/>
</dbReference>
<dbReference type="PIR" id="B84652">
    <property type="entry name" value="B84652"/>
</dbReference>
<dbReference type="RefSeq" id="NP_850068.1">
    <property type="nucleotide sequence ID" value="NM_179737.2"/>
</dbReference>
<dbReference type="FunCoup" id="Q8L7A0">
    <property type="interactions" value="174"/>
</dbReference>
<dbReference type="STRING" id="3702.Q8L7A0"/>
<dbReference type="TCDB" id="2.A.102.5.4">
    <property type="family name" value="the 4-toluene sulfonate uptake permease (tsup) family"/>
</dbReference>
<dbReference type="PaxDb" id="3702-AT2G25737.1"/>
<dbReference type="ProteomicsDB" id="234221"/>
<dbReference type="EnsemblPlants" id="AT2G25737.1">
    <property type="protein sequence ID" value="AT2G25737.1"/>
    <property type="gene ID" value="AT2G25737"/>
</dbReference>
<dbReference type="GeneID" id="817116"/>
<dbReference type="Gramene" id="AT2G25737.1">
    <property type="protein sequence ID" value="AT2G25737.1"/>
    <property type="gene ID" value="AT2G25737"/>
</dbReference>
<dbReference type="KEGG" id="ath:AT2G25737"/>
<dbReference type="Araport" id="AT2G25737"/>
<dbReference type="TAIR" id="AT2G25737"/>
<dbReference type="eggNOG" id="ENOG502QS2K">
    <property type="taxonomic scope" value="Eukaryota"/>
</dbReference>
<dbReference type="HOGENOM" id="CLU_029011_0_0_1"/>
<dbReference type="InParanoid" id="Q8L7A0"/>
<dbReference type="OMA" id="NMVHKIQ"/>
<dbReference type="OrthoDB" id="434519at2759"/>
<dbReference type="PhylomeDB" id="Q8L7A0"/>
<dbReference type="PRO" id="PR:Q8L7A0"/>
<dbReference type="Proteomes" id="UP000006548">
    <property type="component" value="Chromosome 2"/>
</dbReference>
<dbReference type="ExpressionAtlas" id="Q8L7A0">
    <property type="expression patterns" value="baseline and differential"/>
</dbReference>
<dbReference type="GO" id="GO:0016020">
    <property type="term" value="C:membrane"/>
    <property type="evidence" value="ECO:0007669"/>
    <property type="project" value="UniProtKB-SubCell"/>
</dbReference>
<dbReference type="InterPro" id="IPR002781">
    <property type="entry name" value="TM_pro_TauE-like"/>
</dbReference>
<dbReference type="PANTHER" id="PTHR14255">
    <property type="entry name" value="CEREBLON"/>
    <property type="match status" value="1"/>
</dbReference>
<dbReference type="PANTHER" id="PTHR14255:SF1">
    <property type="entry name" value="SULFITE EXPORTER TAUE_SAFE FAMILY PROTEIN 3"/>
    <property type="match status" value="1"/>
</dbReference>
<dbReference type="Pfam" id="PF01925">
    <property type="entry name" value="TauE"/>
    <property type="match status" value="2"/>
</dbReference>
<proteinExistence type="evidence at transcript level"/>
<gene>
    <name evidence="3" type="ordered locus">At2g25737</name>
    <name evidence="4" type="ORF">F17H15</name>
    <name evidence="5" type="ORF">F3N11</name>
</gene>
<comment type="subcellular location">
    <subcellularLocation>
        <location evidence="1">Membrane</location>
        <topology evidence="1">Multi-pass membrane protein</topology>
    </subcellularLocation>
</comment>
<comment type="similarity">
    <text evidence="2">Belongs to the 4-toluene sulfonate uptake permease (TSUP) (TC 2.A.102) family.</text>
</comment>
<comment type="sequence caution" evidence="2">
    <conflict type="erroneous gene model prediction">
        <sequence resource="EMBL-CDS" id="AAC42255"/>
    </conflict>
    <text>The predicted gene has been split into 2 genes: At2g25737 and At2g25740.</text>
</comment>
<comment type="sequence caution" evidence="2">
    <conflict type="erroneous gene model prediction">
        <sequence resource="EMBL-CDS" id="AAM15102"/>
    </conflict>
    <text>The predicted gene has been split into 2 genes: At2g25737 and At2g25740.</text>
</comment>
<reference key="1">
    <citation type="journal article" date="1999" name="Nature">
        <title>Sequence and analysis of chromosome 2 of the plant Arabidopsis thaliana.</title>
        <authorList>
            <person name="Lin X."/>
            <person name="Kaul S."/>
            <person name="Rounsley S.D."/>
            <person name="Shea T.P."/>
            <person name="Benito M.-I."/>
            <person name="Town C.D."/>
            <person name="Fujii C.Y."/>
            <person name="Mason T.M."/>
            <person name="Bowman C.L."/>
            <person name="Barnstead M.E."/>
            <person name="Feldblyum T.V."/>
            <person name="Buell C.R."/>
            <person name="Ketchum K.A."/>
            <person name="Lee J.J."/>
            <person name="Ronning C.M."/>
            <person name="Koo H.L."/>
            <person name="Moffat K.S."/>
            <person name="Cronin L.A."/>
            <person name="Shen M."/>
            <person name="Pai G."/>
            <person name="Van Aken S."/>
            <person name="Umayam L."/>
            <person name="Tallon L.J."/>
            <person name="Gill J.E."/>
            <person name="Adams M.D."/>
            <person name="Carrera A.J."/>
            <person name="Creasy T.H."/>
            <person name="Goodman H.M."/>
            <person name="Somerville C.R."/>
            <person name="Copenhaver G.P."/>
            <person name="Preuss D."/>
            <person name="Nierman W.C."/>
            <person name="White O."/>
            <person name="Eisen J.A."/>
            <person name="Salzberg S.L."/>
            <person name="Fraser C.M."/>
            <person name="Venter J.C."/>
        </authorList>
    </citation>
    <scope>NUCLEOTIDE SEQUENCE [LARGE SCALE GENOMIC DNA]</scope>
    <source>
        <strain>cv. Columbia</strain>
    </source>
</reference>
<reference key="2">
    <citation type="journal article" date="2017" name="Plant J.">
        <title>Araport11: a complete reannotation of the Arabidopsis thaliana reference genome.</title>
        <authorList>
            <person name="Cheng C.Y."/>
            <person name="Krishnakumar V."/>
            <person name="Chan A.P."/>
            <person name="Thibaud-Nissen F."/>
            <person name="Schobel S."/>
            <person name="Town C.D."/>
        </authorList>
    </citation>
    <scope>GENOME REANNOTATION</scope>
    <source>
        <strain>cv. Columbia</strain>
    </source>
</reference>
<reference key="3">
    <citation type="journal article" date="2002" name="Science">
        <title>Functional annotation of a full-length Arabidopsis cDNA collection.</title>
        <authorList>
            <person name="Seki M."/>
            <person name="Narusaka M."/>
            <person name="Kamiya A."/>
            <person name="Ishida J."/>
            <person name="Satou M."/>
            <person name="Sakurai T."/>
            <person name="Nakajima M."/>
            <person name="Enju A."/>
            <person name="Akiyama K."/>
            <person name="Oono Y."/>
            <person name="Muramatsu M."/>
            <person name="Hayashizaki Y."/>
            <person name="Kawai J."/>
            <person name="Carninci P."/>
            <person name="Itoh M."/>
            <person name="Ishii Y."/>
            <person name="Arakawa T."/>
            <person name="Shibata K."/>
            <person name="Shinagawa A."/>
            <person name="Shinozaki K."/>
        </authorList>
    </citation>
    <scope>NUCLEOTIDE SEQUENCE [LARGE SCALE MRNA]</scope>
    <source>
        <strain>cv. Columbia</strain>
    </source>
</reference>
<reference key="4">
    <citation type="journal article" date="2003" name="Science">
        <title>Empirical analysis of transcriptional activity in the Arabidopsis genome.</title>
        <authorList>
            <person name="Yamada K."/>
            <person name="Lim J."/>
            <person name="Dale J.M."/>
            <person name="Chen H."/>
            <person name="Shinn P."/>
            <person name="Palm C.J."/>
            <person name="Southwick A.M."/>
            <person name="Wu H.C."/>
            <person name="Kim C.J."/>
            <person name="Nguyen M."/>
            <person name="Pham P.K."/>
            <person name="Cheuk R.F."/>
            <person name="Karlin-Newmann G."/>
            <person name="Liu S.X."/>
            <person name="Lam B."/>
            <person name="Sakano H."/>
            <person name="Wu T."/>
            <person name="Yu G."/>
            <person name="Miranda M."/>
            <person name="Quach H.L."/>
            <person name="Tripp M."/>
            <person name="Chang C.H."/>
            <person name="Lee J.M."/>
            <person name="Toriumi M.J."/>
            <person name="Chan M.M."/>
            <person name="Tang C.C."/>
            <person name="Onodera C.S."/>
            <person name="Deng J.M."/>
            <person name="Akiyama K."/>
            <person name="Ansari Y."/>
            <person name="Arakawa T."/>
            <person name="Banh J."/>
            <person name="Banno F."/>
            <person name="Bowser L."/>
            <person name="Brooks S.Y."/>
            <person name="Carninci P."/>
            <person name="Chao Q."/>
            <person name="Choy N."/>
            <person name="Enju A."/>
            <person name="Goldsmith A.D."/>
            <person name="Gurjal M."/>
            <person name="Hansen N.F."/>
            <person name="Hayashizaki Y."/>
            <person name="Johnson-Hopson C."/>
            <person name="Hsuan V.W."/>
            <person name="Iida K."/>
            <person name="Karnes M."/>
            <person name="Khan S."/>
            <person name="Koesema E."/>
            <person name="Ishida J."/>
            <person name="Jiang P.X."/>
            <person name="Jones T."/>
            <person name="Kawai J."/>
            <person name="Kamiya A."/>
            <person name="Meyers C."/>
            <person name="Nakajima M."/>
            <person name="Narusaka M."/>
            <person name="Seki M."/>
            <person name="Sakurai T."/>
            <person name="Satou M."/>
            <person name="Tamse R."/>
            <person name="Vaysberg M."/>
            <person name="Wallender E.K."/>
            <person name="Wong C."/>
            <person name="Yamamura Y."/>
            <person name="Yuan S."/>
            <person name="Shinozaki K."/>
            <person name="Davis R.W."/>
            <person name="Theologis A."/>
            <person name="Ecker J.R."/>
        </authorList>
    </citation>
    <scope>NUCLEOTIDE SEQUENCE [LARGE SCALE MRNA]</scope>
    <source>
        <strain>cv. Columbia</strain>
    </source>
</reference>
<evidence type="ECO:0000255" key="1"/>
<evidence type="ECO:0000305" key="2"/>
<evidence type="ECO:0000312" key="3">
    <source>
        <dbReference type="Araport" id="AT2G25737"/>
    </source>
</evidence>
<evidence type="ECO:0000312" key="4">
    <source>
        <dbReference type="EMBL" id="AAC42255.1"/>
    </source>
</evidence>
<evidence type="ECO:0000312" key="5">
    <source>
        <dbReference type="EMBL" id="AAM15102.1"/>
    </source>
</evidence>
<evidence type="ECO:0000312" key="6">
    <source>
        <dbReference type="EMBL" id="AEC07746.1"/>
    </source>
</evidence>
<name>TAUE3_ARATH</name>
<accession>Q8L7A0</accession>
<accession>O82323</accession>
<feature type="chain" id="PRO_0000439273" description="Sulfite exporter TauE/SafE family protein 3">
    <location>
        <begin position="1"/>
        <end position="476"/>
    </location>
</feature>
<feature type="transmembrane region" description="Helical" evidence="1">
    <location>
        <begin position="8"/>
        <end position="28"/>
    </location>
</feature>
<feature type="transmembrane region" description="Helical" evidence="1">
    <location>
        <begin position="76"/>
        <end position="92"/>
    </location>
</feature>
<feature type="transmembrane region" description="Helical" evidence="1">
    <location>
        <begin position="99"/>
        <end position="115"/>
    </location>
</feature>
<feature type="transmembrane region" description="Helical" evidence="1">
    <location>
        <begin position="120"/>
        <end position="142"/>
    </location>
</feature>
<feature type="transmembrane region" description="Helical" evidence="1">
    <location>
        <begin position="151"/>
        <end position="171"/>
    </location>
</feature>
<feature type="transmembrane region" description="Helical" evidence="1">
    <location>
        <begin position="172"/>
        <end position="192"/>
    </location>
</feature>
<feature type="transmembrane region" description="Helical" evidence="1">
    <location>
        <begin position="257"/>
        <end position="277"/>
    </location>
</feature>
<feature type="transmembrane region" description="Helical" evidence="1">
    <location>
        <begin position="291"/>
        <end position="311"/>
    </location>
</feature>
<feature type="transmembrane region" description="Helical" evidence="1">
    <location>
        <begin position="339"/>
        <end position="359"/>
    </location>
</feature>
<feature type="transmembrane region" description="Helical" evidence="1">
    <location>
        <begin position="360"/>
        <end position="380"/>
    </location>
</feature>
<feature type="transmembrane region" description="Helical" evidence="1">
    <location>
        <begin position="397"/>
        <end position="417"/>
    </location>
</feature>
<feature type="transmembrane region" description="Helical" evidence="1">
    <location>
        <begin position="433"/>
        <end position="453"/>
    </location>
</feature>
<organism>
    <name type="scientific">Arabidopsis thaliana</name>
    <name type="common">Mouse-ear cress</name>
    <dbReference type="NCBI Taxonomy" id="3702"/>
    <lineage>
        <taxon>Eukaryota</taxon>
        <taxon>Viridiplantae</taxon>
        <taxon>Streptophyta</taxon>
        <taxon>Embryophyta</taxon>
        <taxon>Tracheophyta</taxon>
        <taxon>Spermatophyta</taxon>
        <taxon>Magnoliopsida</taxon>
        <taxon>eudicotyledons</taxon>
        <taxon>Gunneridae</taxon>
        <taxon>Pentapetalae</taxon>
        <taxon>rosids</taxon>
        <taxon>malvids</taxon>
        <taxon>Brassicales</taxon>
        <taxon>Brassicaceae</taxon>
        <taxon>Camelineae</taxon>
        <taxon>Arabidopsis</taxon>
    </lineage>
</organism>